<protein>
    <recommendedName>
        <fullName evidence="1">Chaperone protein DnaJ</fullName>
    </recommendedName>
</protein>
<feature type="chain" id="PRO_1000085276" description="Chaperone protein DnaJ">
    <location>
        <begin position="1"/>
        <end position="373"/>
    </location>
</feature>
<feature type="domain" description="J" evidence="1">
    <location>
        <begin position="4"/>
        <end position="68"/>
    </location>
</feature>
<feature type="repeat" description="CXXCXGXG motif">
    <location>
        <begin position="149"/>
        <end position="156"/>
    </location>
</feature>
<feature type="repeat" description="CXXCXGXG motif">
    <location>
        <begin position="166"/>
        <end position="173"/>
    </location>
</feature>
<feature type="repeat" description="CXXCXGXG motif">
    <location>
        <begin position="188"/>
        <end position="195"/>
    </location>
</feature>
<feature type="repeat" description="CXXCXGXG motif">
    <location>
        <begin position="202"/>
        <end position="209"/>
    </location>
</feature>
<feature type="zinc finger region" description="CR-type" evidence="1">
    <location>
        <begin position="136"/>
        <end position="214"/>
    </location>
</feature>
<feature type="binding site" evidence="1">
    <location>
        <position position="149"/>
    </location>
    <ligand>
        <name>Zn(2+)</name>
        <dbReference type="ChEBI" id="CHEBI:29105"/>
        <label>1</label>
    </ligand>
</feature>
<feature type="binding site" evidence="1">
    <location>
        <position position="152"/>
    </location>
    <ligand>
        <name>Zn(2+)</name>
        <dbReference type="ChEBI" id="CHEBI:29105"/>
        <label>1</label>
    </ligand>
</feature>
<feature type="binding site" evidence="1">
    <location>
        <position position="166"/>
    </location>
    <ligand>
        <name>Zn(2+)</name>
        <dbReference type="ChEBI" id="CHEBI:29105"/>
        <label>2</label>
    </ligand>
</feature>
<feature type="binding site" evidence="1">
    <location>
        <position position="169"/>
    </location>
    <ligand>
        <name>Zn(2+)</name>
        <dbReference type="ChEBI" id="CHEBI:29105"/>
        <label>2</label>
    </ligand>
</feature>
<feature type="binding site" evidence="1">
    <location>
        <position position="188"/>
    </location>
    <ligand>
        <name>Zn(2+)</name>
        <dbReference type="ChEBI" id="CHEBI:29105"/>
        <label>2</label>
    </ligand>
</feature>
<feature type="binding site" evidence="1">
    <location>
        <position position="191"/>
    </location>
    <ligand>
        <name>Zn(2+)</name>
        <dbReference type="ChEBI" id="CHEBI:29105"/>
        <label>2</label>
    </ligand>
</feature>
<feature type="binding site" evidence="1">
    <location>
        <position position="202"/>
    </location>
    <ligand>
        <name>Zn(2+)</name>
        <dbReference type="ChEBI" id="CHEBI:29105"/>
        <label>1</label>
    </ligand>
</feature>
<feature type="binding site" evidence="1">
    <location>
        <position position="205"/>
    </location>
    <ligand>
        <name>Zn(2+)</name>
        <dbReference type="ChEBI" id="CHEBI:29105"/>
        <label>1</label>
    </ligand>
</feature>
<accession>A8GR21</accession>
<keyword id="KW-0143">Chaperone</keyword>
<keyword id="KW-0963">Cytoplasm</keyword>
<keyword id="KW-0235">DNA replication</keyword>
<keyword id="KW-0479">Metal-binding</keyword>
<keyword id="KW-0677">Repeat</keyword>
<keyword id="KW-0346">Stress response</keyword>
<keyword id="KW-0862">Zinc</keyword>
<keyword id="KW-0863">Zinc-finger</keyword>
<evidence type="ECO:0000255" key="1">
    <source>
        <dbReference type="HAMAP-Rule" id="MF_01152"/>
    </source>
</evidence>
<sequence>MSQNYYQILGVSKTASQADLKKAYLKLAKQYHPDTTDAKDAEKKFKAINAAYDVLKDEQKRAAYDRLGHDAFQNQQSRGGGGNHGGFHPDINDIFGDFFSDFMGGSRRSSRPTSAKVRGSDLKYNLTINLEEAFHGIEKNINFSSAVKCNTCHGSGSEKGETVTTCDACSGVGATRMQQGFFTIEQACHKCQGNGHIIKNPCKKCHGMGRYHKQRNLSVNIPAGVENGTRIRHTGEGEAGIRGGNSGDLYVDITIKPHDIYKVDGANLHCKLPISFVNAALGGEIEVPVIEGGKVSLTIPAGTQNGDQLRLRSKGMSKMRSTIRGDMLTHIHVEVPKNLSKRQRELLEEFKKESINEKENDGSFFNKMKSLWS</sequence>
<gene>
    <name evidence="1" type="primary">dnaJ</name>
    <name type="ordered locus">A1G_01330</name>
</gene>
<organism>
    <name type="scientific">Rickettsia rickettsii (strain Sheila Smith)</name>
    <dbReference type="NCBI Taxonomy" id="392021"/>
    <lineage>
        <taxon>Bacteria</taxon>
        <taxon>Pseudomonadati</taxon>
        <taxon>Pseudomonadota</taxon>
        <taxon>Alphaproteobacteria</taxon>
        <taxon>Rickettsiales</taxon>
        <taxon>Rickettsiaceae</taxon>
        <taxon>Rickettsieae</taxon>
        <taxon>Rickettsia</taxon>
        <taxon>spotted fever group</taxon>
    </lineage>
</organism>
<reference key="1">
    <citation type="submission" date="2007-09" db="EMBL/GenBank/DDBJ databases">
        <title>Complete genome sequence of Rickettsia rickettsii.</title>
        <authorList>
            <person name="Madan A."/>
            <person name="Fahey J."/>
            <person name="Helton E."/>
            <person name="Ketteman M."/>
            <person name="Madan A."/>
            <person name="Rodrigues S."/>
            <person name="Sanchez A."/>
            <person name="Dasch G."/>
            <person name="Eremeeva M."/>
        </authorList>
    </citation>
    <scope>NUCLEOTIDE SEQUENCE [LARGE SCALE GENOMIC DNA]</scope>
    <source>
        <strain>Sheila Smith</strain>
    </source>
</reference>
<name>DNAJ_RICRS</name>
<comment type="function">
    <text evidence="1">Participates actively in the response to hyperosmotic and heat shock by preventing the aggregation of stress-denatured proteins and by disaggregating proteins, also in an autonomous, DnaK-independent fashion. Unfolded proteins bind initially to DnaJ; upon interaction with the DnaJ-bound protein, DnaK hydrolyzes its bound ATP, resulting in the formation of a stable complex. GrpE releases ADP from DnaK; ATP binding to DnaK triggers the release of the substrate protein, thus completing the reaction cycle. Several rounds of ATP-dependent interactions between DnaJ, DnaK and GrpE are required for fully efficient folding. Also involved, together with DnaK and GrpE, in the DNA replication of plasmids through activation of initiation proteins.</text>
</comment>
<comment type="cofactor">
    <cofactor evidence="1">
        <name>Zn(2+)</name>
        <dbReference type="ChEBI" id="CHEBI:29105"/>
    </cofactor>
    <text evidence="1">Binds 2 Zn(2+) ions per monomer.</text>
</comment>
<comment type="subunit">
    <text evidence="1">Homodimer.</text>
</comment>
<comment type="subcellular location">
    <subcellularLocation>
        <location evidence="1">Cytoplasm</location>
    </subcellularLocation>
</comment>
<comment type="domain">
    <text evidence="1">The J domain is necessary and sufficient to stimulate DnaK ATPase activity. Zinc center 1 plays an important role in the autonomous, DnaK-independent chaperone activity of DnaJ. Zinc center 2 is essential for interaction with DnaK and for DnaJ activity.</text>
</comment>
<comment type="similarity">
    <text evidence="1">Belongs to the DnaJ family.</text>
</comment>
<dbReference type="EMBL" id="CP000848">
    <property type="protein sequence ID" value="ABV75846.1"/>
    <property type="molecule type" value="Genomic_DNA"/>
</dbReference>
<dbReference type="RefSeq" id="WP_012150451.1">
    <property type="nucleotide sequence ID" value="NC_009882.1"/>
</dbReference>
<dbReference type="SMR" id="A8GR21"/>
<dbReference type="GeneID" id="79937023"/>
<dbReference type="KEGG" id="rri:A1G_01330"/>
<dbReference type="HOGENOM" id="CLU_017633_0_7_5"/>
<dbReference type="Proteomes" id="UP000006832">
    <property type="component" value="Chromosome"/>
</dbReference>
<dbReference type="GO" id="GO:0005737">
    <property type="term" value="C:cytoplasm"/>
    <property type="evidence" value="ECO:0007669"/>
    <property type="project" value="UniProtKB-SubCell"/>
</dbReference>
<dbReference type="GO" id="GO:0005524">
    <property type="term" value="F:ATP binding"/>
    <property type="evidence" value="ECO:0007669"/>
    <property type="project" value="InterPro"/>
</dbReference>
<dbReference type="GO" id="GO:0031072">
    <property type="term" value="F:heat shock protein binding"/>
    <property type="evidence" value="ECO:0007669"/>
    <property type="project" value="InterPro"/>
</dbReference>
<dbReference type="GO" id="GO:0051082">
    <property type="term" value="F:unfolded protein binding"/>
    <property type="evidence" value="ECO:0007669"/>
    <property type="project" value="UniProtKB-UniRule"/>
</dbReference>
<dbReference type="GO" id="GO:0008270">
    <property type="term" value="F:zinc ion binding"/>
    <property type="evidence" value="ECO:0007669"/>
    <property type="project" value="UniProtKB-UniRule"/>
</dbReference>
<dbReference type="GO" id="GO:0051085">
    <property type="term" value="P:chaperone cofactor-dependent protein refolding"/>
    <property type="evidence" value="ECO:0007669"/>
    <property type="project" value="TreeGrafter"/>
</dbReference>
<dbReference type="GO" id="GO:0006260">
    <property type="term" value="P:DNA replication"/>
    <property type="evidence" value="ECO:0007669"/>
    <property type="project" value="UniProtKB-KW"/>
</dbReference>
<dbReference type="GO" id="GO:0042026">
    <property type="term" value="P:protein refolding"/>
    <property type="evidence" value="ECO:0007669"/>
    <property type="project" value="TreeGrafter"/>
</dbReference>
<dbReference type="GO" id="GO:0009408">
    <property type="term" value="P:response to heat"/>
    <property type="evidence" value="ECO:0007669"/>
    <property type="project" value="InterPro"/>
</dbReference>
<dbReference type="CDD" id="cd06257">
    <property type="entry name" value="DnaJ"/>
    <property type="match status" value="1"/>
</dbReference>
<dbReference type="CDD" id="cd10747">
    <property type="entry name" value="DnaJ_C"/>
    <property type="match status" value="1"/>
</dbReference>
<dbReference type="CDD" id="cd10719">
    <property type="entry name" value="DnaJ_zf"/>
    <property type="match status" value="1"/>
</dbReference>
<dbReference type="FunFam" id="1.10.287.110:FF:000153">
    <property type="entry name" value="Chaperone protein DnaJ"/>
    <property type="match status" value="1"/>
</dbReference>
<dbReference type="FunFam" id="2.10.230.10:FF:000002">
    <property type="entry name" value="Molecular chaperone DnaJ"/>
    <property type="match status" value="1"/>
</dbReference>
<dbReference type="FunFam" id="2.60.260.20:FF:000004">
    <property type="entry name" value="Molecular chaperone DnaJ"/>
    <property type="match status" value="1"/>
</dbReference>
<dbReference type="Gene3D" id="1.10.287.110">
    <property type="entry name" value="DnaJ domain"/>
    <property type="match status" value="1"/>
</dbReference>
<dbReference type="Gene3D" id="2.10.230.10">
    <property type="entry name" value="Heat shock protein DnaJ, cysteine-rich domain"/>
    <property type="match status" value="1"/>
</dbReference>
<dbReference type="Gene3D" id="2.60.260.20">
    <property type="entry name" value="Urease metallochaperone UreE, N-terminal domain"/>
    <property type="match status" value="2"/>
</dbReference>
<dbReference type="HAMAP" id="MF_01152">
    <property type="entry name" value="DnaJ"/>
    <property type="match status" value="1"/>
</dbReference>
<dbReference type="InterPro" id="IPR012724">
    <property type="entry name" value="DnaJ"/>
</dbReference>
<dbReference type="InterPro" id="IPR002939">
    <property type="entry name" value="DnaJ_C"/>
</dbReference>
<dbReference type="InterPro" id="IPR001623">
    <property type="entry name" value="DnaJ_domain"/>
</dbReference>
<dbReference type="InterPro" id="IPR018253">
    <property type="entry name" value="DnaJ_domain_CS"/>
</dbReference>
<dbReference type="InterPro" id="IPR008971">
    <property type="entry name" value="HSP40/DnaJ_pept-bd"/>
</dbReference>
<dbReference type="InterPro" id="IPR001305">
    <property type="entry name" value="HSP_DnaJ_Cys-rich_dom"/>
</dbReference>
<dbReference type="InterPro" id="IPR036410">
    <property type="entry name" value="HSP_DnaJ_Cys-rich_dom_sf"/>
</dbReference>
<dbReference type="InterPro" id="IPR036869">
    <property type="entry name" value="J_dom_sf"/>
</dbReference>
<dbReference type="NCBIfam" id="TIGR02349">
    <property type="entry name" value="DnaJ_bact"/>
    <property type="match status" value="1"/>
</dbReference>
<dbReference type="NCBIfam" id="NF008035">
    <property type="entry name" value="PRK10767.1"/>
    <property type="match status" value="1"/>
</dbReference>
<dbReference type="NCBIfam" id="NF010893">
    <property type="entry name" value="PRK14300.1"/>
    <property type="match status" value="1"/>
</dbReference>
<dbReference type="PANTHER" id="PTHR43096">
    <property type="entry name" value="DNAJ HOMOLOG 1, MITOCHONDRIAL-RELATED"/>
    <property type="match status" value="1"/>
</dbReference>
<dbReference type="PANTHER" id="PTHR43096:SF52">
    <property type="entry name" value="DNAJ HOMOLOG 1, MITOCHONDRIAL-RELATED"/>
    <property type="match status" value="1"/>
</dbReference>
<dbReference type="Pfam" id="PF00226">
    <property type="entry name" value="DnaJ"/>
    <property type="match status" value="1"/>
</dbReference>
<dbReference type="Pfam" id="PF01556">
    <property type="entry name" value="DnaJ_C"/>
    <property type="match status" value="1"/>
</dbReference>
<dbReference type="Pfam" id="PF00684">
    <property type="entry name" value="DnaJ_CXXCXGXG"/>
    <property type="match status" value="1"/>
</dbReference>
<dbReference type="PRINTS" id="PR00625">
    <property type="entry name" value="JDOMAIN"/>
</dbReference>
<dbReference type="SMART" id="SM00271">
    <property type="entry name" value="DnaJ"/>
    <property type="match status" value="1"/>
</dbReference>
<dbReference type="SUPFAM" id="SSF46565">
    <property type="entry name" value="Chaperone J-domain"/>
    <property type="match status" value="1"/>
</dbReference>
<dbReference type="SUPFAM" id="SSF57938">
    <property type="entry name" value="DnaJ/Hsp40 cysteine-rich domain"/>
    <property type="match status" value="1"/>
</dbReference>
<dbReference type="SUPFAM" id="SSF49493">
    <property type="entry name" value="HSP40/DnaJ peptide-binding domain"/>
    <property type="match status" value="2"/>
</dbReference>
<dbReference type="PROSITE" id="PS00636">
    <property type="entry name" value="DNAJ_1"/>
    <property type="match status" value="1"/>
</dbReference>
<dbReference type="PROSITE" id="PS50076">
    <property type="entry name" value="DNAJ_2"/>
    <property type="match status" value="1"/>
</dbReference>
<dbReference type="PROSITE" id="PS51188">
    <property type="entry name" value="ZF_CR"/>
    <property type="match status" value="1"/>
</dbReference>
<proteinExistence type="inferred from homology"/>